<protein>
    <recommendedName>
        <fullName evidence="12">DNA polymerase epsilon subunit 3</fullName>
    </recommendedName>
    <alternativeName>
        <fullName evidence="16">Chromatin accessibility complex 14kD protein</fullName>
    </alternativeName>
    <alternativeName>
        <fullName evidence="11">Histone-fold protein CHRAC subunit</fullName>
    </alternativeName>
</protein>
<name>DPOE3_DROME</name>
<organism evidence="17">
    <name type="scientific">Drosophila melanogaster</name>
    <name type="common">Fruit fly</name>
    <dbReference type="NCBI Taxonomy" id="7227"/>
    <lineage>
        <taxon>Eukaryota</taxon>
        <taxon>Metazoa</taxon>
        <taxon>Ecdysozoa</taxon>
        <taxon>Arthropoda</taxon>
        <taxon>Hexapoda</taxon>
        <taxon>Insecta</taxon>
        <taxon>Pterygota</taxon>
        <taxon>Neoptera</taxon>
        <taxon>Endopterygota</taxon>
        <taxon>Diptera</taxon>
        <taxon>Brachycera</taxon>
        <taxon>Muscomorpha</taxon>
        <taxon>Ephydroidea</taxon>
        <taxon>Drosophilidae</taxon>
        <taxon>Drosophila</taxon>
        <taxon>Sophophora</taxon>
    </lineage>
</organism>
<gene>
    <name evidence="9 16" type="primary">Chrac-14</name>
    <name evidence="16" type="synonym">CHRAC</name>
    <name evidence="10 16" type="synonym">CHRAC14</name>
    <name evidence="12" type="synonym">DNApolE3</name>
    <name evidence="16" type="synonym">mary</name>
    <name evidence="16" type="ORF">CG13399</name>
</gene>
<comment type="function">
    <text evidence="1 2 4 5 6 7 8">Accessory component of the DNA polymerase epsilon complex (By similarity). Participates in DNA repair and in chromosomal DNA replication (By similarity). Histone-like protein which promotes nucleosome sliding of ATP-dependent nucleosome remodeling complexes (PubMed:10856248, PubMed:11447119, PubMed:18327268). Part of the chromatin-accessibility complex (CHRAC) which uses energy/ATP to increase the general accessibility of DNA in chromatin (PubMed:10856248, PubMed:11447119). As a heterodimer with Chrac-16, binds DNA and facilitates nucleosome sliding by Acf (PubMed:16260604). Has a role in DNA damage response by preventing cid mislocalization to chromatin (PubMed:24703848).</text>
</comment>
<comment type="subunit">
    <text evidence="2 4 5 6 7 8">Homodimer (PubMed:18327268). Component of the DNA polymerase epsilon complex consisting of four subunits: the catalytic subunit PolE1/DNApol-epsilon255 and the accessory subunits PolE2/DNApol-epsilon58, Chrac-14/DNApolE3 and PolE4 (By similarity). Component of the chromatin accessibility complex (CHRAC), composed of Chrac-14, Chrac-16, Acf and Iswi (PubMed:10856248, PubMed:11447119). Forms an heterodimer with Chrac-16 (PubMed:10856248, PubMed:16260604). The Chrac-14/Chrac-16 heterodimer interacts with Acf (via N-terminus) (PubMed:16260604). Interacts directly with Iswi and this interaction is further stabilized by association with Chrac-16 (PubMed:10856248). Component of the Ada2a-containing (ATAC) complex composed of at least Ada2a, Atac1, Hcf, Ada3, Gcn5, Mocs2B, Charac-14, Atac3, Atac2, NC2beta and wds (PubMed:18327268). Interacts with cid (PubMed:24703848).</text>
</comment>
<comment type="interaction">
    <interactant intactId="EBI-138718">
        <id>Q9V444</id>
    </interactant>
    <interactant intactId="EBI-193917">
        <id>Q9V452</id>
        <label>Chrac-16</label>
    </interactant>
    <organismsDiffer>false</organismsDiffer>
    <experiments>11</experiments>
</comment>
<comment type="interaction">
    <interactant intactId="EBI-138718">
        <id>Q9V444</id>
    </interactant>
    <interactant intactId="EBI-2912878">
        <id>Q9V4C8</id>
        <label>Hcf</label>
    </interactant>
    <organismsDiffer>false</organismsDiffer>
    <experiments>3</experiments>
</comment>
<comment type="subcellular location">
    <subcellularLocation>
        <location evidence="4 5 7 8">Nucleus</location>
    </subcellularLocation>
</comment>
<comment type="developmental stage">
    <text evidence="4">Expressed in oocytes and in the early embryo and down-regulated afterwards (at protein level).</text>
</comment>
<evidence type="ECO:0000250" key="1">
    <source>
        <dbReference type="UniProtKB" id="Q04603"/>
    </source>
</evidence>
<evidence type="ECO:0000250" key="2">
    <source>
        <dbReference type="UniProtKB" id="Q9NRF9"/>
    </source>
</evidence>
<evidence type="ECO:0000256" key="3">
    <source>
        <dbReference type="SAM" id="MobiDB-lite"/>
    </source>
</evidence>
<evidence type="ECO:0000269" key="4">
    <source>
    </source>
</evidence>
<evidence type="ECO:0000269" key="5">
    <source>
    </source>
</evidence>
<evidence type="ECO:0000269" key="6">
    <source>
    </source>
</evidence>
<evidence type="ECO:0000269" key="7">
    <source>
    </source>
</evidence>
<evidence type="ECO:0000269" key="8">
    <source>
    </source>
</evidence>
<evidence type="ECO:0000303" key="9">
    <source>
    </source>
</evidence>
<evidence type="ECO:0000303" key="10">
    <source>
    </source>
</evidence>
<evidence type="ECO:0000303" key="11">
    <source>
    </source>
</evidence>
<evidence type="ECO:0000305" key="12"/>
<evidence type="ECO:0000312" key="13">
    <source>
        <dbReference type="EMBL" id="AAL48592.1"/>
    </source>
</evidence>
<evidence type="ECO:0000312" key="14">
    <source>
        <dbReference type="EMBL" id="ANY27634.1"/>
    </source>
</evidence>
<evidence type="ECO:0000312" key="15">
    <source>
        <dbReference type="EMBL" id="CAB70602.1"/>
    </source>
</evidence>
<evidence type="ECO:0000312" key="16">
    <source>
        <dbReference type="FlyBase" id="FBgn0043002"/>
    </source>
</evidence>
<evidence type="ECO:0000312" key="17">
    <source>
        <dbReference type="Proteomes" id="UP000000803"/>
    </source>
</evidence>
<evidence type="ECO:0007744" key="18">
    <source>
        <dbReference type="PDB" id="2BYK"/>
    </source>
</evidence>
<evidence type="ECO:0007744" key="19">
    <source>
        <dbReference type="PDB" id="2BYM"/>
    </source>
</evidence>
<evidence type="ECO:0007829" key="20">
    <source>
        <dbReference type="PDB" id="2BYK"/>
    </source>
</evidence>
<sequence>MVERIEDLNLPNAVIGRLIKEALPESASVSKEARAAIARAASVFAIFVTSSSTALAHKQNHKTITAKDILQTLTELDFESFVPSLTQDLEVYRKVVKEKKESKASKKDSNTAENANASATATAEEAPE</sequence>
<proteinExistence type="evidence at protein level"/>
<dbReference type="EMBL" id="AJ271141">
    <property type="protein sequence ID" value="CAB70602.1"/>
    <property type="molecule type" value="mRNA"/>
</dbReference>
<dbReference type="EMBL" id="AE014134">
    <property type="protein sequence ID" value="AAO41168.1"/>
    <property type="molecule type" value="Genomic_DNA"/>
</dbReference>
<dbReference type="EMBL" id="AY070970">
    <property type="protein sequence ID" value="AAL48592.1"/>
    <property type="molecule type" value="mRNA"/>
</dbReference>
<dbReference type="EMBL" id="KX531824">
    <property type="protein sequence ID" value="ANY27634.1"/>
    <property type="molecule type" value="mRNA"/>
</dbReference>
<dbReference type="RefSeq" id="NP_476646.2">
    <property type="nucleotide sequence ID" value="NM_057298.4"/>
</dbReference>
<dbReference type="PDB" id="2BYK">
    <property type="method" value="X-ray"/>
    <property type="resolution" value="2.40 A"/>
    <property type="chains" value="B/D=1-128"/>
</dbReference>
<dbReference type="PDB" id="2BYM">
    <property type="method" value="X-ray"/>
    <property type="resolution" value="2.80 A"/>
    <property type="chains" value="B/D=1-128"/>
</dbReference>
<dbReference type="PDBsum" id="2BYK"/>
<dbReference type="PDBsum" id="2BYM"/>
<dbReference type="SMR" id="Q9V444"/>
<dbReference type="ComplexPortal" id="CPX-2422">
    <property type="entry name" value="DNA polymerase epsilon complex"/>
</dbReference>
<dbReference type="ComplexPortal" id="CPX-2742">
    <property type="entry name" value="ATAC histone acetyltransferase complex"/>
</dbReference>
<dbReference type="ComplexPortal" id="CPX-2775">
    <property type="entry name" value="CHRAC chromatin remodeling complex"/>
</dbReference>
<dbReference type="FunCoup" id="Q9V444">
    <property type="interactions" value="683"/>
</dbReference>
<dbReference type="IntAct" id="Q9V444">
    <property type="interactions" value="22"/>
</dbReference>
<dbReference type="STRING" id="7227.FBpp0099657"/>
<dbReference type="PaxDb" id="7227-FBpp0099655"/>
<dbReference type="EnsemblMetazoa" id="FBtr0100268">
    <property type="protein sequence ID" value="FBpp0099657"/>
    <property type="gene ID" value="FBgn0043002"/>
</dbReference>
<dbReference type="GeneID" id="3772329"/>
<dbReference type="KEGG" id="dme:Dmel_CG13399"/>
<dbReference type="UCSC" id="CG13399-RA">
    <property type="organism name" value="d. melanogaster"/>
</dbReference>
<dbReference type="AGR" id="FB:FBgn0043002"/>
<dbReference type="CTD" id="3772329"/>
<dbReference type="FlyBase" id="FBgn0043002">
    <property type="gene designation" value="Chrac-14"/>
</dbReference>
<dbReference type="VEuPathDB" id="VectorBase:FBgn0043002"/>
<dbReference type="eggNOG" id="KOG0870">
    <property type="taxonomic scope" value="Eukaryota"/>
</dbReference>
<dbReference type="HOGENOM" id="CLU_066247_7_4_1"/>
<dbReference type="InParanoid" id="Q9V444"/>
<dbReference type="OMA" id="KQNHRTI"/>
<dbReference type="OrthoDB" id="1707486at2759"/>
<dbReference type="PhylomeDB" id="Q9V444"/>
<dbReference type="Reactome" id="R-DME-110314">
    <property type="pathway name" value="Recognition of DNA damage by PCNA-containing replication complex"/>
</dbReference>
<dbReference type="Reactome" id="R-DME-5651801">
    <property type="pathway name" value="PCNA-Dependent Long Patch Base Excision Repair"/>
</dbReference>
<dbReference type="Reactome" id="R-DME-5656169">
    <property type="pathway name" value="Termination of translesion DNA synthesis"/>
</dbReference>
<dbReference type="Reactome" id="R-DME-5696400">
    <property type="pathway name" value="Dual Incision in GG-NER"/>
</dbReference>
<dbReference type="Reactome" id="R-DME-6782135">
    <property type="pathway name" value="Dual incision in TC-NER"/>
</dbReference>
<dbReference type="Reactome" id="R-DME-68952">
    <property type="pathway name" value="DNA replication initiation"/>
</dbReference>
<dbReference type="Reactome" id="R-DME-68962">
    <property type="pathway name" value="Activation of the pre-replicative complex"/>
</dbReference>
<dbReference type="SignaLink" id="Q9V444"/>
<dbReference type="BioGRID-ORCS" id="3772329">
    <property type="hits" value="0 hits in 3 CRISPR screens"/>
</dbReference>
<dbReference type="EvolutionaryTrace" id="Q9V444"/>
<dbReference type="GenomeRNAi" id="3772329"/>
<dbReference type="PRO" id="PR:Q9V444"/>
<dbReference type="Proteomes" id="UP000000803">
    <property type="component" value="Chromosome 2L"/>
</dbReference>
<dbReference type="Bgee" id="FBgn0043002">
    <property type="expression patterns" value="Expressed in egg cell and 83 other cell types or tissues"/>
</dbReference>
<dbReference type="GO" id="GO:0140672">
    <property type="term" value="C:ATAC complex"/>
    <property type="evidence" value="ECO:0000314"/>
    <property type="project" value="FlyBase"/>
</dbReference>
<dbReference type="GO" id="GO:0008623">
    <property type="term" value="C:CHRAC"/>
    <property type="evidence" value="ECO:0000314"/>
    <property type="project" value="FlyBase"/>
</dbReference>
<dbReference type="GO" id="GO:0008622">
    <property type="term" value="C:epsilon DNA polymerase complex"/>
    <property type="evidence" value="ECO:0000250"/>
    <property type="project" value="FlyBase"/>
</dbReference>
<dbReference type="GO" id="GO:0031490">
    <property type="term" value="F:chromatin DNA binding"/>
    <property type="evidence" value="ECO:0000318"/>
    <property type="project" value="GO_Central"/>
</dbReference>
<dbReference type="GO" id="GO:0046982">
    <property type="term" value="F:protein heterodimerization activity"/>
    <property type="evidence" value="ECO:0007669"/>
    <property type="project" value="InterPro"/>
</dbReference>
<dbReference type="GO" id="GO:0071480">
    <property type="term" value="P:cellular response to gamma radiation"/>
    <property type="evidence" value="ECO:0000315"/>
    <property type="project" value="FlyBase"/>
</dbReference>
<dbReference type="GO" id="GO:0034080">
    <property type="term" value="P:CENP-A containing chromatin assembly"/>
    <property type="evidence" value="ECO:0000315"/>
    <property type="project" value="FlyBase"/>
</dbReference>
<dbReference type="GO" id="GO:0006338">
    <property type="term" value="P:chromatin remodeling"/>
    <property type="evidence" value="ECO:0000314"/>
    <property type="project" value="FlyBase"/>
</dbReference>
<dbReference type="GO" id="GO:0006974">
    <property type="term" value="P:DNA damage response"/>
    <property type="evidence" value="ECO:0000315"/>
    <property type="project" value="FlyBase"/>
</dbReference>
<dbReference type="GO" id="GO:0006261">
    <property type="term" value="P:DNA-templated DNA replication"/>
    <property type="evidence" value="ECO:0000250"/>
    <property type="project" value="FlyBase"/>
</dbReference>
<dbReference type="GO" id="GO:0031507">
    <property type="term" value="P:heterochromatin formation"/>
    <property type="evidence" value="ECO:0000318"/>
    <property type="project" value="GO_Central"/>
</dbReference>
<dbReference type="GO" id="GO:0006272">
    <property type="term" value="P:leading strand elongation"/>
    <property type="evidence" value="ECO:0000318"/>
    <property type="project" value="GO_Central"/>
</dbReference>
<dbReference type="CDD" id="cd22928">
    <property type="entry name" value="HFD_POLE3_DPB4"/>
    <property type="match status" value="1"/>
</dbReference>
<dbReference type="FunFam" id="1.10.20.10:FF:000128">
    <property type="entry name" value="Chromatin accessibility complex 14kD protein"/>
    <property type="match status" value="1"/>
</dbReference>
<dbReference type="Gene3D" id="1.10.20.10">
    <property type="entry name" value="Histone, subunit A"/>
    <property type="match status" value="1"/>
</dbReference>
<dbReference type="InterPro" id="IPR003958">
    <property type="entry name" value="CBFA_NFYB_domain"/>
</dbReference>
<dbReference type="InterPro" id="IPR051377">
    <property type="entry name" value="DNA_Pol-Epsilon_Subunit"/>
</dbReference>
<dbReference type="InterPro" id="IPR009072">
    <property type="entry name" value="Histone-fold"/>
</dbReference>
<dbReference type="PANTHER" id="PTHR46172">
    <property type="entry name" value="DNA POLYMERASE EPSILON SUBUNIT 3"/>
    <property type="match status" value="1"/>
</dbReference>
<dbReference type="PANTHER" id="PTHR46172:SF1">
    <property type="entry name" value="DNA POLYMERASE EPSILON SUBUNIT 3"/>
    <property type="match status" value="1"/>
</dbReference>
<dbReference type="Pfam" id="PF00808">
    <property type="entry name" value="CBFD_NFYB_HMF"/>
    <property type="match status" value="1"/>
</dbReference>
<dbReference type="SUPFAM" id="SSF47113">
    <property type="entry name" value="Histone-fold"/>
    <property type="match status" value="1"/>
</dbReference>
<accession>Q9V444</accession>
<keyword id="KW-0002">3D-structure</keyword>
<keyword id="KW-0903">Direct protein sequencing</keyword>
<keyword id="KW-0539">Nucleus</keyword>
<keyword id="KW-1185">Reference proteome</keyword>
<reference evidence="15" key="1">
    <citation type="journal article" date="2000" name="EMBO J.">
        <title>Two histone fold proteins, CHRAC-14 and CHRAC-16, are developmentally regulated subunits of chromatin accessibility complex (CHRAC).</title>
        <authorList>
            <person name="Corona D.F."/>
            <person name="Eberharter A."/>
            <person name="Budde A."/>
            <person name="Deuring R."/>
            <person name="Ferrari S."/>
            <person name="Varga-Weisz P."/>
            <person name="Wilm M."/>
            <person name="Tamkun J."/>
            <person name="Becker P.B."/>
        </authorList>
    </citation>
    <scope>NUCLEOTIDE SEQUENCE [MRNA]</scope>
    <scope>PROTEIN SEQUENCE OF 11-17; 21-31 AND 40-128</scope>
    <scope>IDENTIFICATION BY MASS SPECTROMETRY</scope>
    <scope>IDENTIFICATION IN THE CHRAC COMPLEX</scope>
    <scope>INTERACTION WITH CHRAC-16 AND ISWI</scope>
    <scope>SUBCELLULAR LOCATION</scope>
    <scope>DEVELOPMENTAL STAGE</scope>
</reference>
<reference evidence="17" key="2">
    <citation type="journal article" date="2000" name="Science">
        <title>The genome sequence of Drosophila melanogaster.</title>
        <authorList>
            <person name="Adams M.D."/>
            <person name="Celniker S.E."/>
            <person name="Holt R.A."/>
            <person name="Evans C.A."/>
            <person name="Gocayne J.D."/>
            <person name="Amanatides P.G."/>
            <person name="Scherer S.E."/>
            <person name="Li P.W."/>
            <person name="Hoskins R.A."/>
            <person name="Galle R.F."/>
            <person name="George R.A."/>
            <person name="Lewis S.E."/>
            <person name="Richards S."/>
            <person name="Ashburner M."/>
            <person name="Henderson S.N."/>
            <person name="Sutton G.G."/>
            <person name="Wortman J.R."/>
            <person name="Yandell M.D."/>
            <person name="Zhang Q."/>
            <person name="Chen L.X."/>
            <person name="Brandon R.C."/>
            <person name="Rogers Y.-H.C."/>
            <person name="Blazej R.G."/>
            <person name="Champe M."/>
            <person name="Pfeiffer B.D."/>
            <person name="Wan K.H."/>
            <person name="Doyle C."/>
            <person name="Baxter E.G."/>
            <person name="Helt G."/>
            <person name="Nelson C.R."/>
            <person name="Miklos G.L.G."/>
            <person name="Abril J.F."/>
            <person name="Agbayani A."/>
            <person name="An H.-J."/>
            <person name="Andrews-Pfannkoch C."/>
            <person name="Baldwin D."/>
            <person name="Ballew R.M."/>
            <person name="Basu A."/>
            <person name="Baxendale J."/>
            <person name="Bayraktaroglu L."/>
            <person name="Beasley E.M."/>
            <person name="Beeson K.Y."/>
            <person name="Benos P.V."/>
            <person name="Berman B.P."/>
            <person name="Bhandari D."/>
            <person name="Bolshakov S."/>
            <person name="Borkova D."/>
            <person name="Botchan M.R."/>
            <person name="Bouck J."/>
            <person name="Brokstein P."/>
            <person name="Brottier P."/>
            <person name="Burtis K.C."/>
            <person name="Busam D.A."/>
            <person name="Butler H."/>
            <person name="Cadieu E."/>
            <person name="Center A."/>
            <person name="Chandra I."/>
            <person name="Cherry J.M."/>
            <person name="Cawley S."/>
            <person name="Dahlke C."/>
            <person name="Davenport L.B."/>
            <person name="Davies P."/>
            <person name="de Pablos B."/>
            <person name="Delcher A."/>
            <person name="Deng Z."/>
            <person name="Mays A.D."/>
            <person name="Dew I."/>
            <person name="Dietz S.M."/>
            <person name="Dodson K."/>
            <person name="Doup L.E."/>
            <person name="Downes M."/>
            <person name="Dugan-Rocha S."/>
            <person name="Dunkov B.C."/>
            <person name="Dunn P."/>
            <person name="Durbin K.J."/>
            <person name="Evangelista C.C."/>
            <person name="Ferraz C."/>
            <person name="Ferriera S."/>
            <person name="Fleischmann W."/>
            <person name="Fosler C."/>
            <person name="Gabrielian A.E."/>
            <person name="Garg N.S."/>
            <person name="Gelbart W.M."/>
            <person name="Glasser K."/>
            <person name="Glodek A."/>
            <person name="Gong F."/>
            <person name="Gorrell J.H."/>
            <person name="Gu Z."/>
            <person name="Guan P."/>
            <person name="Harris M."/>
            <person name="Harris N.L."/>
            <person name="Harvey D.A."/>
            <person name="Heiman T.J."/>
            <person name="Hernandez J.R."/>
            <person name="Houck J."/>
            <person name="Hostin D."/>
            <person name="Houston K.A."/>
            <person name="Howland T.J."/>
            <person name="Wei M.-H."/>
            <person name="Ibegwam C."/>
            <person name="Jalali M."/>
            <person name="Kalush F."/>
            <person name="Karpen G.H."/>
            <person name="Ke Z."/>
            <person name="Kennison J.A."/>
            <person name="Ketchum K.A."/>
            <person name="Kimmel B.E."/>
            <person name="Kodira C.D."/>
            <person name="Kraft C.L."/>
            <person name="Kravitz S."/>
            <person name="Kulp D."/>
            <person name="Lai Z."/>
            <person name="Lasko P."/>
            <person name="Lei Y."/>
            <person name="Levitsky A.A."/>
            <person name="Li J.H."/>
            <person name="Li Z."/>
            <person name="Liang Y."/>
            <person name="Lin X."/>
            <person name="Liu X."/>
            <person name="Mattei B."/>
            <person name="McIntosh T.C."/>
            <person name="McLeod M.P."/>
            <person name="McPherson D."/>
            <person name="Merkulov G."/>
            <person name="Milshina N.V."/>
            <person name="Mobarry C."/>
            <person name="Morris J."/>
            <person name="Moshrefi A."/>
            <person name="Mount S.M."/>
            <person name="Moy M."/>
            <person name="Murphy B."/>
            <person name="Murphy L."/>
            <person name="Muzny D.M."/>
            <person name="Nelson D.L."/>
            <person name="Nelson D.R."/>
            <person name="Nelson K.A."/>
            <person name="Nixon K."/>
            <person name="Nusskern D.R."/>
            <person name="Pacleb J.M."/>
            <person name="Palazzolo M."/>
            <person name="Pittman G.S."/>
            <person name="Pan S."/>
            <person name="Pollard J."/>
            <person name="Puri V."/>
            <person name="Reese M.G."/>
            <person name="Reinert K."/>
            <person name="Remington K."/>
            <person name="Saunders R.D.C."/>
            <person name="Scheeler F."/>
            <person name="Shen H."/>
            <person name="Shue B.C."/>
            <person name="Siden-Kiamos I."/>
            <person name="Simpson M."/>
            <person name="Skupski M.P."/>
            <person name="Smith T.J."/>
            <person name="Spier E."/>
            <person name="Spradling A.C."/>
            <person name="Stapleton M."/>
            <person name="Strong R."/>
            <person name="Sun E."/>
            <person name="Svirskas R."/>
            <person name="Tector C."/>
            <person name="Turner R."/>
            <person name="Venter E."/>
            <person name="Wang A.H."/>
            <person name="Wang X."/>
            <person name="Wang Z.-Y."/>
            <person name="Wassarman D.A."/>
            <person name="Weinstock G.M."/>
            <person name="Weissenbach J."/>
            <person name="Williams S.M."/>
            <person name="Woodage T."/>
            <person name="Worley K.C."/>
            <person name="Wu D."/>
            <person name="Yang S."/>
            <person name="Yao Q.A."/>
            <person name="Ye J."/>
            <person name="Yeh R.-F."/>
            <person name="Zaveri J.S."/>
            <person name="Zhan M."/>
            <person name="Zhang G."/>
            <person name="Zhao Q."/>
            <person name="Zheng L."/>
            <person name="Zheng X.H."/>
            <person name="Zhong F.N."/>
            <person name="Zhong W."/>
            <person name="Zhou X."/>
            <person name="Zhu S.C."/>
            <person name="Zhu X."/>
            <person name="Smith H.O."/>
            <person name="Gibbs R.A."/>
            <person name="Myers E.W."/>
            <person name="Rubin G.M."/>
            <person name="Venter J.C."/>
        </authorList>
    </citation>
    <scope>NUCLEOTIDE SEQUENCE [LARGE SCALE GENOMIC DNA]</scope>
    <source>
        <strain evidence="17">Berkeley</strain>
    </source>
</reference>
<reference evidence="17" key="3">
    <citation type="journal article" date="2002" name="Genome Biol.">
        <title>Annotation of the Drosophila melanogaster euchromatic genome: a systematic review.</title>
        <authorList>
            <person name="Misra S."/>
            <person name="Crosby M.A."/>
            <person name="Mungall C.J."/>
            <person name="Matthews B.B."/>
            <person name="Campbell K.S."/>
            <person name="Hradecky P."/>
            <person name="Huang Y."/>
            <person name="Kaminker J.S."/>
            <person name="Millburn G.H."/>
            <person name="Prochnik S.E."/>
            <person name="Smith C.D."/>
            <person name="Tupy J.L."/>
            <person name="Whitfield E.J."/>
            <person name="Bayraktaroglu L."/>
            <person name="Berman B.P."/>
            <person name="Bettencourt B.R."/>
            <person name="Celniker S.E."/>
            <person name="de Grey A.D.N.J."/>
            <person name="Drysdale R.A."/>
            <person name="Harris N.L."/>
            <person name="Richter J."/>
            <person name="Russo S."/>
            <person name="Schroeder A.J."/>
            <person name="Shu S.Q."/>
            <person name="Stapleton M."/>
            <person name="Yamada C."/>
            <person name="Ashburner M."/>
            <person name="Gelbart W.M."/>
            <person name="Rubin G.M."/>
            <person name="Lewis S.E."/>
        </authorList>
    </citation>
    <scope>GENOME REANNOTATION</scope>
    <source>
        <strain evidence="17">Berkeley</strain>
    </source>
</reference>
<reference evidence="13" key="4">
    <citation type="journal article" date="2002" name="Genome Biol.">
        <title>A Drosophila full-length cDNA resource.</title>
        <authorList>
            <person name="Stapleton M."/>
            <person name="Carlson J.W."/>
            <person name="Brokstein P."/>
            <person name="Yu C."/>
            <person name="Champe M."/>
            <person name="George R.A."/>
            <person name="Guarin H."/>
            <person name="Kronmiller B."/>
            <person name="Pacleb J.M."/>
            <person name="Park S."/>
            <person name="Wan K.H."/>
            <person name="Rubin G.M."/>
            <person name="Celniker S.E."/>
        </authorList>
    </citation>
    <scope>NUCLEOTIDE SEQUENCE [LARGE SCALE MRNA]</scope>
    <source>
        <strain evidence="13">Berkeley</strain>
        <tissue evidence="13">Embryo</tissue>
    </source>
</reference>
<reference evidence="14" key="5">
    <citation type="submission" date="2016-07" db="EMBL/GenBank/DDBJ databases">
        <authorList>
            <person name="Wan K."/>
            <person name="Booth B."/>
            <person name="Spirohn K."/>
            <person name="Hao T."/>
            <person name="Hu Y."/>
            <person name="Calderwood M."/>
            <person name="Hill D."/>
            <person name="Mohr S."/>
            <person name="Vidal M."/>
            <person name="Celniker S."/>
            <person name="Perrimon N."/>
        </authorList>
    </citation>
    <scope>NUCLEOTIDE SEQUENCE [LARGE SCALE MRNA]</scope>
    <source>
        <strain evidence="14">Berkeley</strain>
    </source>
</reference>
<reference evidence="12" key="6">
    <citation type="journal article" date="2001" name="EMBO J.">
        <title>Acf1, the largest subunit of CHRAC, regulates ISWI-induced nucleosome remodelling.</title>
        <authorList>
            <person name="Eberharter A."/>
            <person name="Ferrari S."/>
            <person name="Laengst G."/>
            <person name="Straub T."/>
            <person name="Imhof A."/>
            <person name="Varga-Weisz P."/>
            <person name="Wilm M."/>
            <person name="Becker P.B."/>
        </authorList>
    </citation>
    <scope>FUNCTION</scope>
    <scope>IDENTIFICATION IN THE CHRAC COMPLEX</scope>
    <scope>INTERACTION WITH CHRAC-16</scope>
    <scope>SUBCELLULAR LOCATION</scope>
</reference>
<reference evidence="12" key="7">
    <citation type="journal article" date="2008" name="Nat. Struct. Mol. Biol.">
        <title>ATAC is a double histone acetyltransferase complex that stimulates nucleosome sliding.</title>
        <authorList>
            <person name="Suganuma T."/>
            <person name="Gutierrez J.L."/>
            <person name="Li B."/>
            <person name="Florens L."/>
            <person name="Swanson S.K."/>
            <person name="Washburn M.P."/>
            <person name="Abmayr S.M."/>
            <person name="Workman J.L."/>
        </authorList>
    </citation>
    <scope>IDENTIFICATION BY MASS SPECTROMETRY</scope>
    <scope>FUNCTION</scope>
    <scope>SUBUNIT</scope>
    <scope>IDENTIFICATION IN THE ATAC COMPLEX</scope>
    <scope>SUBCELLULAR LOCATION</scope>
</reference>
<reference evidence="12" key="8">
    <citation type="journal article" date="2014" name="Cell Rep.">
        <title>The histone-fold protein CHRAC14 influences chromatin composition in response to DNA damage.</title>
        <authorList>
            <person name="Mathew V."/>
            <person name="Pauleau A.L."/>
            <person name="Steffen N."/>
            <person name="Bergner A."/>
            <person name="Becker P.B."/>
            <person name="Erhardt S."/>
        </authorList>
    </citation>
    <scope>FUNCTION</scope>
    <scope>INTERACTION WITH CID</scope>
    <scope>SUBCELLULAR LOCATION</scope>
</reference>
<reference evidence="18 19" key="9">
    <citation type="journal article" date="2005" name="Mol. Cell. Biol.">
        <title>The histone fold subunits of Drosophila CHRAC facilitate nucleosome sliding through dynamic DNA interactions.</title>
        <authorList>
            <person name="Hartlepp K.F."/>
            <person name="Fernandez-Tornero C."/>
            <person name="Eberharter A."/>
            <person name="Grune T."/>
            <person name="Muller C.W."/>
            <person name="Becker P.B."/>
        </authorList>
    </citation>
    <scope>X-RAY CRYSTALLOGRAPHY (2.40 ANGSTROMS) OF 7-99 IN COMPLEX WITH CHRAC-16</scope>
    <scope>FUNCTION</scope>
    <scope>INTERACTION WITH ACF</scope>
    <scope>MUTAGENESIS OF 2-VAL--LEU-8 AND 109-SER--GLU-128</scope>
</reference>
<feature type="chain" id="PRO_0000448437" description="DNA polymerase epsilon subunit 3">
    <location>
        <begin position="1"/>
        <end position="128"/>
    </location>
</feature>
<feature type="region of interest" description="Disordered" evidence="3">
    <location>
        <begin position="98"/>
        <end position="128"/>
    </location>
</feature>
<feature type="compositionally biased region" description="Basic and acidic residues" evidence="3">
    <location>
        <begin position="98"/>
        <end position="110"/>
    </location>
</feature>
<feature type="compositionally biased region" description="Low complexity" evidence="3">
    <location>
        <begin position="111"/>
        <end position="128"/>
    </location>
</feature>
<feature type="mutagenesis site" description="When in a heterodimer with Chrac-16, reduces Acf binding but does not affect DNA binding or Acf nucleosome sliding activity." evidence="6">
    <location>
        <begin position="2"/>
        <end position="18"/>
    </location>
</feature>
<feature type="mutagenesis site" description="When in a heterodimer with Chrac-16, reduces DNA binding and is less able to stimulate Acf nucleosome sliding activity." evidence="6">
    <location>
        <begin position="109"/>
        <end position="128"/>
    </location>
</feature>
<feature type="helix" evidence="20">
    <location>
        <begin position="14"/>
        <end position="22"/>
    </location>
</feature>
<feature type="helix" evidence="20">
    <location>
        <begin position="31"/>
        <end position="58"/>
    </location>
</feature>
<feature type="helix" evidence="20">
    <location>
        <begin position="66"/>
        <end position="75"/>
    </location>
</feature>
<feature type="turn" evidence="20">
    <location>
        <begin position="79"/>
        <end position="81"/>
    </location>
</feature>
<feature type="helix" evidence="20">
    <location>
        <begin position="82"/>
        <end position="96"/>
    </location>
</feature>